<comment type="function">
    <text evidence="1">One of the primary rRNA binding proteins, it binds directly to 16S rRNA central domain where it helps coordinate assembly of the platform of the 30S subunit.</text>
</comment>
<comment type="subunit">
    <text evidence="1">Part of the 30S ribosomal subunit. Contacts proteins S5 and S12.</text>
</comment>
<comment type="similarity">
    <text evidence="1">Belongs to the universal ribosomal protein uS8 family.</text>
</comment>
<keyword id="KW-0687">Ribonucleoprotein</keyword>
<keyword id="KW-0689">Ribosomal protein</keyword>
<keyword id="KW-0694">RNA-binding</keyword>
<keyword id="KW-0699">rRNA-binding</keyword>
<organism>
    <name type="scientific">Chlamydia abortus (strain DSM 27085 / S26/3)</name>
    <name type="common">Chlamydophila abortus</name>
    <dbReference type="NCBI Taxonomy" id="218497"/>
    <lineage>
        <taxon>Bacteria</taxon>
        <taxon>Pseudomonadati</taxon>
        <taxon>Chlamydiota</taxon>
        <taxon>Chlamydiia</taxon>
        <taxon>Chlamydiales</taxon>
        <taxon>Chlamydiaceae</taxon>
        <taxon>Chlamydia/Chlamydophila group</taxon>
        <taxon>Chlamydia</taxon>
    </lineage>
</organism>
<sequence>MGMTSDTIADLLTRIRNALKAEHLYVDLEHSKMREAIVKILKQHGFLAHYLIKEEHRKRTMRIFLQYTNDRKPVIRQLKRVSKPSRRVYVPAAKIPYVFGNMGISVLSTSQGVLDGSTARAKNIGGELLCLVW</sequence>
<feature type="chain" id="PRO_0000225863" description="Small ribosomal subunit protein uS8">
    <location>
        <begin position="1"/>
        <end position="133"/>
    </location>
</feature>
<proteinExistence type="inferred from homology"/>
<evidence type="ECO:0000255" key="1">
    <source>
        <dbReference type="HAMAP-Rule" id="MF_01302"/>
    </source>
</evidence>
<evidence type="ECO:0000305" key="2"/>
<dbReference type="EMBL" id="CR848038">
    <property type="protein sequence ID" value="CAH63563.1"/>
    <property type="molecule type" value="Genomic_DNA"/>
</dbReference>
<dbReference type="RefSeq" id="WP_006343776.1">
    <property type="nucleotide sequence ID" value="NC_004552.2"/>
</dbReference>
<dbReference type="SMR" id="Q5L707"/>
<dbReference type="KEGG" id="cab:CAB105"/>
<dbReference type="eggNOG" id="COG0096">
    <property type="taxonomic scope" value="Bacteria"/>
</dbReference>
<dbReference type="HOGENOM" id="CLU_098428_0_2_0"/>
<dbReference type="OrthoDB" id="9802617at2"/>
<dbReference type="Proteomes" id="UP000001012">
    <property type="component" value="Chromosome"/>
</dbReference>
<dbReference type="GO" id="GO:1990904">
    <property type="term" value="C:ribonucleoprotein complex"/>
    <property type="evidence" value="ECO:0007669"/>
    <property type="project" value="UniProtKB-KW"/>
</dbReference>
<dbReference type="GO" id="GO:0005840">
    <property type="term" value="C:ribosome"/>
    <property type="evidence" value="ECO:0007669"/>
    <property type="project" value="UniProtKB-KW"/>
</dbReference>
<dbReference type="GO" id="GO:0019843">
    <property type="term" value="F:rRNA binding"/>
    <property type="evidence" value="ECO:0007669"/>
    <property type="project" value="UniProtKB-UniRule"/>
</dbReference>
<dbReference type="GO" id="GO:0003735">
    <property type="term" value="F:structural constituent of ribosome"/>
    <property type="evidence" value="ECO:0007669"/>
    <property type="project" value="InterPro"/>
</dbReference>
<dbReference type="GO" id="GO:0006412">
    <property type="term" value="P:translation"/>
    <property type="evidence" value="ECO:0007669"/>
    <property type="project" value="UniProtKB-UniRule"/>
</dbReference>
<dbReference type="FunFam" id="3.30.1370.30:FF:000002">
    <property type="entry name" value="30S ribosomal protein S8"/>
    <property type="match status" value="1"/>
</dbReference>
<dbReference type="FunFam" id="3.30.1490.10:FF:000001">
    <property type="entry name" value="30S ribosomal protein S8"/>
    <property type="match status" value="1"/>
</dbReference>
<dbReference type="Gene3D" id="3.30.1370.30">
    <property type="match status" value="1"/>
</dbReference>
<dbReference type="Gene3D" id="3.30.1490.10">
    <property type="match status" value="1"/>
</dbReference>
<dbReference type="HAMAP" id="MF_01302_B">
    <property type="entry name" value="Ribosomal_uS8_B"/>
    <property type="match status" value="1"/>
</dbReference>
<dbReference type="InterPro" id="IPR000630">
    <property type="entry name" value="Ribosomal_uS8"/>
</dbReference>
<dbReference type="InterPro" id="IPR047863">
    <property type="entry name" value="Ribosomal_uS8_CS"/>
</dbReference>
<dbReference type="InterPro" id="IPR035987">
    <property type="entry name" value="Ribosomal_uS8_sf"/>
</dbReference>
<dbReference type="NCBIfam" id="NF001109">
    <property type="entry name" value="PRK00136.1"/>
    <property type="match status" value="1"/>
</dbReference>
<dbReference type="PANTHER" id="PTHR11758">
    <property type="entry name" value="40S RIBOSOMAL PROTEIN S15A"/>
    <property type="match status" value="1"/>
</dbReference>
<dbReference type="Pfam" id="PF00410">
    <property type="entry name" value="Ribosomal_S8"/>
    <property type="match status" value="1"/>
</dbReference>
<dbReference type="SUPFAM" id="SSF56047">
    <property type="entry name" value="Ribosomal protein S8"/>
    <property type="match status" value="1"/>
</dbReference>
<dbReference type="PROSITE" id="PS00053">
    <property type="entry name" value="RIBOSOMAL_S8"/>
    <property type="match status" value="1"/>
</dbReference>
<name>RS8_CHLAB</name>
<gene>
    <name evidence="1" type="primary">rpsH</name>
    <name type="ordered locus">CAB105</name>
</gene>
<accession>Q5L707</accession>
<protein>
    <recommendedName>
        <fullName evidence="1">Small ribosomal subunit protein uS8</fullName>
    </recommendedName>
    <alternativeName>
        <fullName evidence="2">30S ribosomal protein S8</fullName>
    </alternativeName>
</protein>
<reference key="1">
    <citation type="journal article" date="2005" name="Genome Res.">
        <title>The Chlamydophila abortus genome sequence reveals an array of variable proteins that contribute to interspecies variation.</title>
        <authorList>
            <person name="Thomson N.R."/>
            <person name="Yeats C."/>
            <person name="Bell K."/>
            <person name="Holden M.T.G."/>
            <person name="Bentley S.D."/>
            <person name="Livingstone M."/>
            <person name="Cerdeno-Tarraga A.-M."/>
            <person name="Harris B."/>
            <person name="Doggett J."/>
            <person name="Ormond D."/>
            <person name="Mungall K."/>
            <person name="Clarke K."/>
            <person name="Feltwell T."/>
            <person name="Hance Z."/>
            <person name="Sanders M."/>
            <person name="Quail M.A."/>
            <person name="Price C."/>
            <person name="Barrell B.G."/>
            <person name="Parkhill J."/>
            <person name="Longbottom D."/>
        </authorList>
    </citation>
    <scope>NUCLEOTIDE SEQUENCE [LARGE SCALE GENOMIC DNA]</scope>
    <source>
        <strain>DSM 27085 / S26/3</strain>
    </source>
</reference>